<comment type="function">
    <molecule>Gag-Pol polyprotein</molecule>
    <text evidence="2">Mediates, with Gag polyprotein, the essential events in virion assembly, including binding the plasma membrane, making the protein-protein interactions necessary to create spherical particles, recruiting the viral Env proteins, and packaging the genomic RNA via direct interactions with the RNA packaging sequence.</text>
</comment>
<comment type="function">
    <molecule>Matrix protein p16</molecule>
    <text evidence="3">Targets the polyprotein to the plasma membrane.</text>
</comment>
<comment type="function">
    <molecule>Capsid protein p25</molecule>
    <text evidence="2">Forms the core that encapsulates the genomic RNA-nucleocapsid complex in the virion.</text>
</comment>
<comment type="function">
    <molecule>Nucleocapsid protein p14</molecule>
    <text evidence="2">Encapsulates and protects viral dimeric unspliced genomic RNA (gRNA). Binds these RNAs through its zinc fingers. Acts as a nucleic acid chaperone which is involved in rearrangement of nucleic acid secondary structure during gRNA retrotranscription. Also facilitates template switch leading to recombination.</text>
</comment>
<comment type="function">
    <molecule>Protease</molecule>
    <text evidence="7">The aspartyl protease mediates proteolytic cleavages of Gag and Gag-Pol polyproteins during or shortly after the release of the virion from the plasma membrane. Cleavages take place as an ordered, step-wise cascade to yield mature proteins. This process is called maturation. Displays maximal activity during the budding process just prior to particle release from the cell.</text>
</comment>
<comment type="function">
    <molecule>Reverse transcriptase/ribonuclease H</molecule>
    <text evidence="8">RT is a multifunctional enzyme that converts the viral dimeric RNA genome into dsDNA in the cytoplasm, shortly after virus entry into the cell. This enzyme displays a DNA polymerase activity that can copy either DNA or RNA templates, and a ribonuclease H (RNase H) activity that cleaves the RNA strand of RNA-DNA heteroduplexes in a partially processive 3' to 5' endonucleasic mode. Conversion of viral genomic RNA into dsDNA requires many steps. A tRNA-Trp binds to the primer-binding site (PBS) situated at the 5' end of the viral RNA. RT uses the 3' end of the tRNA primer to perfom a short round of RNA-dependent minus-strand DNA synthesis. The reading proceeds through the U5 region and ends after the repeated (R) region which is present at both ends of viral RNA. The portion of the RNA-DNA heteroduplex is digested by the RNase H, resulting in a ssDNA product attached to the tRNA primer. This ssDNA/tRNA hybridizes with the identical R region situated at the 3' end of viral RNA. This template exchange, known as minus-strand DNA strong stop transfer, can be either intra- or intermolecular. RT uses the 3' end of this newly synthesized short ssDNA to perfom the RNA-dependent minus-strand DNA synthesis of the whole template. RNase H digests the RNA template except for a polypurine tract (PPT) situated at the 5' end of the genome. It is not clear if both polymerase and RNase H activities are simultaneous. RNase H probably can proceed both in a polymerase-dependent (RNA cut into small fragments by the same RT performing DNA synthesis) and a polymerase-independent mode (cleavage of remaining RNA fragments by free RTs). Secondly, RT performs DNA-directed plus-strand DNA synthesis using the PPT that has not been removed by RNase H as primers. PPT and tRNA primers are then removed by RNase H. The 3' and 5' ssDNA PBS regions hybridize to form a circular dsDNA intermediate. Strand displacement synthesis by RT to the PBS and PPT ends produces a blunt ended, linear dsDNA copy of the viral genome that includes long terminal repeats (LTRs) at both ends.</text>
</comment>
<comment type="function">
    <molecule>Integrase</molecule>
    <text evidence="1">Catalyzes viral DNA integration into the host chromosome, by performing a series of DNA cutting and joining reactions.</text>
</comment>
<comment type="catalytic activity">
    <reaction evidence="9">
        <text>Endonucleolytic cleavage to 5'-phosphomonoester.</text>
        <dbReference type="EC" id="3.1.26.4"/>
    </reaction>
</comment>
<comment type="catalytic activity">
    <reaction>
        <text>3'-end directed exonucleolytic cleavage of viral RNA-DNA hybrid.</text>
        <dbReference type="EC" id="3.1.13.2"/>
    </reaction>
</comment>
<comment type="catalytic activity">
    <reaction>
        <text>dUTP + H2O = dUMP + diphosphate + H(+)</text>
        <dbReference type="Rhea" id="RHEA:10248"/>
        <dbReference type="ChEBI" id="CHEBI:15377"/>
        <dbReference type="ChEBI" id="CHEBI:15378"/>
        <dbReference type="ChEBI" id="CHEBI:33019"/>
        <dbReference type="ChEBI" id="CHEBI:61555"/>
        <dbReference type="ChEBI" id="CHEBI:246422"/>
        <dbReference type="EC" id="3.6.1.23"/>
    </reaction>
</comment>
<comment type="catalytic activity">
    <reaction evidence="8">
        <text>DNA(n) + a 2'-deoxyribonucleoside 5'-triphosphate = DNA(n+1) + diphosphate</text>
        <dbReference type="Rhea" id="RHEA:22508"/>
        <dbReference type="Rhea" id="RHEA-COMP:17339"/>
        <dbReference type="Rhea" id="RHEA-COMP:17340"/>
        <dbReference type="ChEBI" id="CHEBI:33019"/>
        <dbReference type="ChEBI" id="CHEBI:61560"/>
        <dbReference type="ChEBI" id="CHEBI:173112"/>
        <dbReference type="EC" id="2.7.7.49"/>
    </reaction>
</comment>
<comment type="catalytic activity">
    <reaction evidence="8">
        <text>DNA(n) + a 2'-deoxyribonucleoside 5'-triphosphate = DNA(n+1) + diphosphate</text>
        <dbReference type="Rhea" id="RHEA:22508"/>
        <dbReference type="Rhea" id="RHEA-COMP:17339"/>
        <dbReference type="Rhea" id="RHEA-COMP:17340"/>
        <dbReference type="ChEBI" id="CHEBI:33019"/>
        <dbReference type="ChEBI" id="CHEBI:61560"/>
        <dbReference type="ChEBI" id="CHEBI:173112"/>
        <dbReference type="EC" id="2.7.7.7"/>
    </reaction>
</comment>
<comment type="cofactor">
    <cofactor evidence="8">
        <name>Mg(2+)</name>
        <dbReference type="ChEBI" id="CHEBI:18420"/>
    </cofactor>
    <text evidence="8">The RT polymerase active site binds 2 magnesium ions.</text>
</comment>
<comment type="subunit">
    <molecule>Integrase</molecule>
    <text evidence="5">Homotetramer; further associates as a homohexadecamer.</text>
</comment>
<comment type="subcellular location">
    <molecule>Matrix protein p16</molecule>
    <subcellularLocation>
        <location evidence="13">Virion</location>
    </subcellularLocation>
</comment>
<comment type="subcellular location">
    <molecule>Capsid protein p25</molecule>
    <subcellularLocation>
        <location evidence="13">Virion</location>
    </subcellularLocation>
</comment>
<comment type="subcellular location">
    <molecule>Nucleocapsid protein p14</molecule>
    <subcellularLocation>
        <location evidence="13">Virion</location>
    </subcellularLocation>
</comment>
<comment type="alternative products">
    <event type="ribosomal frameshifting"/>
    <isoform>
        <id>P23427-1</id>
        <name>Gag-Pol polyprotein</name>
        <sequence type="displayed"/>
    </isoform>
    <isoform>
        <id>P23425-1</id>
        <name>Gag polyprotein</name>
        <sequence type="external"/>
    </isoform>
</comment>
<comment type="PTM">
    <molecule>Gag-Pol polyprotein</molecule>
    <text evidence="13">Specific enzymatic cleavages by the viral protease yield mature proteins.</text>
</comment>
<comment type="miscellaneous">
    <text evidence="8">The reverse transcriptase is an error-prone enzyme that lacks a proof-reading function. High mutations rate is a direct consequence of this characteristic. RT also displays frequent template switching leading to high recombination rate. Recombination mostly occurs between homologous regions of the two copackaged RNA genomes. If these two RNA molecules derive from different viral strains, reverse transcription will give rise to highly recombinated proviral DNAs.</text>
</comment>
<comment type="miscellaneous">
    <molecule>Isoform Gag-Pol polyprotein</molecule>
    <text evidence="5">Produced by a -1 ribosomal frameshifting between gag and pol.</text>
</comment>
<comment type="similarity">
    <text evidence="13">Belongs to the retroviral Pol polyprotein family.</text>
</comment>
<comment type="sequence caution" evidence="13">
    <conflict type="erroneous gene model prediction">
        <sequence resource="EMBL-CDS" id="AAA17529"/>
    </conflict>
</comment>
<dbReference type="EC" id="3.4.23.-" evidence="7"/>
<dbReference type="EC" id="2.7.7.49" evidence="8"/>
<dbReference type="EC" id="2.7.7.7" evidence="8"/>
<dbReference type="EC" id="3.1.26.4" evidence="9"/>
<dbReference type="EC" id="3.1.13.2"/>
<dbReference type="EC" id="3.6.1.23" evidence="13"/>
<dbReference type="EC" id="2.7.7.-" evidence="1"/>
<dbReference type="EC" id="3.1.-.-" evidence="1"/>
<dbReference type="EMBL" id="M60610">
    <property type="protein sequence ID" value="AAA17529.1"/>
    <property type="status" value="ALT_SEQ"/>
    <property type="molecule type" value="Unassigned_DNA"/>
</dbReference>
<dbReference type="SMR" id="P23427"/>
<dbReference type="MEROPS" id="A02.006"/>
<dbReference type="GO" id="GO:0019028">
    <property type="term" value="C:viral capsid"/>
    <property type="evidence" value="ECO:0007669"/>
    <property type="project" value="UniProtKB-KW"/>
</dbReference>
<dbReference type="GO" id="GO:0004190">
    <property type="term" value="F:aspartic-type endopeptidase activity"/>
    <property type="evidence" value="ECO:0007669"/>
    <property type="project" value="UniProtKB-KW"/>
</dbReference>
<dbReference type="GO" id="GO:0003677">
    <property type="term" value="F:DNA binding"/>
    <property type="evidence" value="ECO:0007669"/>
    <property type="project" value="UniProtKB-KW"/>
</dbReference>
<dbReference type="GO" id="GO:0003887">
    <property type="term" value="F:DNA-directed DNA polymerase activity"/>
    <property type="evidence" value="ECO:0007669"/>
    <property type="project" value="UniProtKB-EC"/>
</dbReference>
<dbReference type="GO" id="GO:0004170">
    <property type="term" value="F:dUTP diphosphatase activity"/>
    <property type="evidence" value="ECO:0007669"/>
    <property type="project" value="UniProtKB-EC"/>
</dbReference>
<dbReference type="GO" id="GO:0004533">
    <property type="term" value="F:exoribonuclease H activity"/>
    <property type="evidence" value="ECO:0007669"/>
    <property type="project" value="UniProtKB-EC"/>
</dbReference>
<dbReference type="GO" id="GO:0035613">
    <property type="term" value="F:RNA stem-loop binding"/>
    <property type="evidence" value="ECO:0007669"/>
    <property type="project" value="TreeGrafter"/>
</dbReference>
<dbReference type="GO" id="GO:0003964">
    <property type="term" value="F:RNA-directed DNA polymerase activity"/>
    <property type="evidence" value="ECO:0007669"/>
    <property type="project" value="UniProtKB-KW"/>
</dbReference>
<dbReference type="GO" id="GO:0004523">
    <property type="term" value="F:RNA-DNA hybrid ribonuclease activity"/>
    <property type="evidence" value="ECO:0007669"/>
    <property type="project" value="UniProtKB-EC"/>
</dbReference>
<dbReference type="GO" id="GO:0008270">
    <property type="term" value="F:zinc ion binding"/>
    <property type="evidence" value="ECO:0007669"/>
    <property type="project" value="UniProtKB-KW"/>
</dbReference>
<dbReference type="GO" id="GO:0015074">
    <property type="term" value="P:DNA integration"/>
    <property type="evidence" value="ECO:0007669"/>
    <property type="project" value="UniProtKB-KW"/>
</dbReference>
<dbReference type="GO" id="GO:0006310">
    <property type="term" value="P:DNA recombination"/>
    <property type="evidence" value="ECO:0007669"/>
    <property type="project" value="UniProtKB-KW"/>
</dbReference>
<dbReference type="GO" id="GO:0075713">
    <property type="term" value="P:establishment of integrated proviral latency"/>
    <property type="evidence" value="ECO:0007669"/>
    <property type="project" value="UniProtKB-KW"/>
</dbReference>
<dbReference type="GO" id="GO:0009117">
    <property type="term" value="P:nucleotide metabolic process"/>
    <property type="evidence" value="ECO:0007669"/>
    <property type="project" value="UniProtKB-KW"/>
</dbReference>
<dbReference type="GO" id="GO:0006508">
    <property type="term" value="P:proteolysis"/>
    <property type="evidence" value="ECO:0007669"/>
    <property type="project" value="UniProtKB-KW"/>
</dbReference>
<dbReference type="GO" id="GO:0046718">
    <property type="term" value="P:symbiont entry into host cell"/>
    <property type="evidence" value="ECO:0007669"/>
    <property type="project" value="UniProtKB-KW"/>
</dbReference>
<dbReference type="GO" id="GO:0044826">
    <property type="term" value="P:viral genome integration into host DNA"/>
    <property type="evidence" value="ECO:0007669"/>
    <property type="project" value="UniProtKB-KW"/>
</dbReference>
<dbReference type="GO" id="GO:0075523">
    <property type="term" value="P:viral translational frameshifting"/>
    <property type="evidence" value="ECO:0007669"/>
    <property type="project" value="UniProtKB-KW"/>
</dbReference>
<dbReference type="CDD" id="cd07557">
    <property type="entry name" value="trimeric_dUTPase"/>
    <property type="match status" value="1"/>
</dbReference>
<dbReference type="Gene3D" id="1.10.10.200">
    <property type="match status" value="1"/>
</dbReference>
<dbReference type="Gene3D" id="1.10.1200.30">
    <property type="match status" value="1"/>
</dbReference>
<dbReference type="Gene3D" id="2.70.40.10">
    <property type="match status" value="1"/>
</dbReference>
<dbReference type="Gene3D" id="3.30.70.270">
    <property type="match status" value="3"/>
</dbReference>
<dbReference type="Gene3D" id="2.40.70.10">
    <property type="entry name" value="Acid Proteases"/>
    <property type="match status" value="1"/>
</dbReference>
<dbReference type="Gene3D" id="3.10.10.10">
    <property type="entry name" value="HIV Type 1 Reverse Transcriptase, subunit A, domain 1"/>
    <property type="match status" value="1"/>
</dbReference>
<dbReference type="Gene3D" id="1.10.375.10">
    <property type="entry name" value="Human Immunodeficiency Virus Type 1 Capsid Protein"/>
    <property type="match status" value="1"/>
</dbReference>
<dbReference type="Gene3D" id="2.30.30.10">
    <property type="entry name" value="Integrase, C-terminal domain superfamily, retroviral"/>
    <property type="match status" value="1"/>
</dbReference>
<dbReference type="Gene3D" id="3.30.420.10">
    <property type="entry name" value="Ribonuclease H-like superfamily/Ribonuclease H"/>
    <property type="match status" value="2"/>
</dbReference>
<dbReference type="Gene3D" id="4.10.60.10">
    <property type="entry name" value="Zinc finger, CCHC-type"/>
    <property type="match status" value="1"/>
</dbReference>
<dbReference type="InterPro" id="IPR001969">
    <property type="entry name" value="Aspartic_peptidase_AS"/>
</dbReference>
<dbReference type="InterPro" id="IPR043502">
    <property type="entry name" value="DNA/RNA_pol_sf"/>
</dbReference>
<dbReference type="InterPro" id="IPR029054">
    <property type="entry name" value="dUTPase-like"/>
</dbReference>
<dbReference type="InterPro" id="IPR036157">
    <property type="entry name" value="dUTPase-like_sf"/>
</dbReference>
<dbReference type="InterPro" id="IPR033704">
    <property type="entry name" value="dUTPase_trimeric"/>
</dbReference>
<dbReference type="InterPro" id="IPR045345">
    <property type="entry name" value="Gag_p24_C"/>
</dbReference>
<dbReference type="InterPro" id="IPR017856">
    <property type="entry name" value="Integrase-like_N"/>
</dbReference>
<dbReference type="InterPro" id="IPR036862">
    <property type="entry name" value="Integrase_C_dom_sf_retrovir"/>
</dbReference>
<dbReference type="InterPro" id="IPR001037">
    <property type="entry name" value="Integrase_C_retrovir"/>
</dbReference>
<dbReference type="InterPro" id="IPR001584">
    <property type="entry name" value="Integrase_cat-core"/>
</dbReference>
<dbReference type="InterPro" id="IPR003308">
    <property type="entry name" value="Integrase_Zn-bd_dom_N"/>
</dbReference>
<dbReference type="InterPro" id="IPR001995">
    <property type="entry name" value="Peptidase_A2_cat"/>
</dbReference>
<dbReference type="InterPro" id="IPR021109">
    <property type="entry name" value="Peptidase_aspartic_dom_sf"/>
</dbReference>
<dbReference type="InterPro" id="IPR018061">
    <property type="entry name" value="Retropepsins"/>
</dbReference>
<dbReference type="InterPro" id="IPR008916">
    <property type="entry name" value="Retrov_capsid_C"/>
</dbReference>
<dbReference type="InterPro" id="IPR008919">
    <property type="entry name" value="Retrov_capsid_N"/>
</dbReference>
<dbReference type="InterPro" id="IPR043128">
    <property type="entry name" value="Rev_trsase/Diguanyl_cyclase"/>
</dbReference>
<dbReference type="InterPro" id="IPR012337">
    <property type="entry name" value="RNaseH-like_sf"/>
</dbReference>
<dbReference type="InterPro" id="IPR002156">
    <property type="entry name" value="RNaseH_domain"/>
</dbReference>
<dbReference type="InterPro" id="IPR036397">
    <property type="entry name" value="RNaseH_sf"/>
</dbReference>
<dbReference type="InterPro" id="IPR000477">
    <property type="entry name" value="RT_dom"/>
</dbReference>
<dbReference type="InterPro" id="IPR001878">
    <property type="entry name" value="Znf_CCHC"/>
</dbReference>
<dbReference type="InterPro" id="IPR036875">
    <property type="entry name" value="Znf_CCHC_sf"/>
</dbReference>
<dbReference type="PANTHER" id="PTHR41694">
    <property type="entry name" value="ENDOGENOUS RETROVIRUS GROUP K MEMBER POL PROTEIN"/>
    <property type="match status" value="1"/>
</dbReference>
<dbReference type="PANTHER" id="PTHR41694:SF3">
    <property type="entry name" value="RNA-DIRECTED DNA POLYMERASE-RELATED"/>
    <property type="match status" value="1"/>
</dbReference>
<dbReference type="Pfam" id="PF00692">
    <property type="entry name" value="dUTPase"/>
    <property type="match status" value="1"/>
</dbReference>
<dbReference type="Pfam" id="PF00607">
    <property type="entry name" value="Gag_p24"/>
    <property type="match status" value="1"/>
</dbReference>
<dbReference type="Pfam" id="PF19317">
    <property type="entry name" value="Gag_p24_C"/>
    <property type="match status" value="1"/>
</dbReference>
<dbReference type="Pfam" id="PF02022">
    <property type="entry name" value="Integrase_Zn"/>
    <property type="match status" value="1"/>
</dbReference>
<dbReference type="Pfam" id="PF00075">
    <property type="entry name" value="RNase_H"/>
    <property type="match status" value="1"/>
</dbReference>
<dbReference type="Pfam" id="PF00665">
    <property type="entry name" value="rve"/>
    <property type="match status" value="1"/>
</dbReference>
<dbReference type="Pfam" id="PF00077">
    <property type="entry name" value="RVP"/>
    <property type="match status" value="1"/>
</dbReference>
<dbReference type="Pfam" id="PF00078">
    <property type="entry name" value="RVT_1"/>
    <property type="match status" value="1"/>
</dbReference>
<dbReference type="Pfam" id="PF00098">
    <property type="entry name" value="zf-CCHC"/>
    <property type="match status" value="2"/>
</dbReference>
<dbReference type="SMART" id="SM00343">
    <property type="entry name" value="ZnF_C2HC"/>
    <property type="match status" value="2"/>
</dbReference>
<dbReference type="SUPFAM" id="SSF50630">
    <property type="entry name" value="Acid proteases"/>
    <property type="match status" value="1"/>
</dbReference>
<dbReference type="SUPFAM" id="SSF50122">
    <property type="entry name" value="DNA-binding domain of retroviral integrase"/>
    <property type="match status" value="1"/>
</dbReference>
<dbReference type="SUPFAM" id="SSF56672">
    <property type="entry name" value="DNA/RNA polymerases"/>
    <property type="match status" value="1"/>
</dbReference>
<dbReference type="SUPFAM" id="SSF51283">
    <property type="entry name" value="dUTPase-like"/>
    <property type="match status" value="1"/>
</dbReference>
<dbReference type="SUPFAM" id="SSF46919">
    <property type="entry name" value="N-terminal Zn binding domain of HIV integrase"/>
    <property type="match status" value="1"/>
</dbReference>
<dbReference type="SUPFAM" id="SSF47353">
    <property type="entry name" value="Retrovirus capsid dimerization domain-like"/>
    <property type="match status" value="1"/>
</dbReference>
<dbReference type="SUPFAM" id="SSF47943">
    <property type="entry name" value="Retrovirus capsid protein, N-terminal core domain"/>
    <property type="match status" value="1"/>
</dbReference>
<dbReference type="SUPFAM" id="SSF57756">
    <property type="entry name" value="Retrovirus zinc finger-like domains"/>
    <property type="match status" value="1"/>
</dbReference>
<dbReference type="SUPFAM" id="SSF53098">
    <property type="entry name" value="Ribonuclease H-like"/>
    <property type="match status" value="2"/>
</dbReference>
<dbReference type="PROSITE" id="PS50175">
    <property type="entry name" value="ASP_PROT_RETROV"/>
    <property type="match status" value="1"/>
</dbReference>
<dbReference type="PROSITE" id="PS00141">
    <property type="entry name" value="ASP_PROTEASE"/>
    <property type="match status" value="1"/>
</dbReference>
<dbReference type="PROSITE" id="PS50994">
    <property type="entry name" value="INTEGRASE"/>
    <property type="match status" value="1"/>
</dbReference>
<dbReference type="PROSITE" id="PS51027">
    <property type="entry name" value="INTEGRASE_DBD"/>
    <property type="match status" value="1"/>
</dbReference>
<dbReference type="PROSITE" id="PS50879">
    <property type="entry name" value="RNASE_H_1"/>
    <property type="match status" value="1"/>
</dbReference>
<dbReference type="PROSITE" id="PS50878">
    <property type="entry name" value="RT_POL"/>
    <property type="match status" value="1"/>
</dbReference>
<dbReference type="PROSITE" id="PS50158">
    <property type="entry name" value="ZF_CCHC"/>
    <property type="match status" value="2"/>
</dbReference>
<dbReference type="PROSITE" id="PS50876">
    <property type="entry name" value="ZF_INTEGRASE"/>
    <property type="match status" value="1"/>
</dbReference>
<name>POL_VILV2</name>
<evidence type="ECO:0000250" key="1">
    <source>
        <dbReference type="UniProtKB" id="P03370"/>
    </source>
</evidence>
<evidence type="ECO:0000250" key="2">
    <source>
        <dbReference type="UniProtKB" id="P04585"/>
    </source>
</evidence>
<evidence type="ECO:0000250" key="3">
    <source>
        <dbReference type="UniProtKB" id="P12497"/>
    </source>
</evidence>
<evidence type="ECO:0000250" key="4">
    <source>
        <dbReference type="UniProtKB" id="P35955"/>
    </source>
</evidence>
<evidence type="ECO:0000250" key="5">
    <source>
        <dbReference type="UniProtKB" id="P35956"/>
    </source>
</evidence>
<evidence type="ECO:0000255" key="6">
    <source>
        <dbReference type="PROSITE-ProRule" id="PRU00047"/>
    </source>
</evidence>
<evidence type="ECO:0000255" key="7">
    <source>
        <dbReference type="PROSITE-ProRule" id="PRU00275"/>
    </source>
</evidence>
<evidence type="ECO:0000255" key="8">
    <source>
        <dbReference type="PROSITE-ProRule" id="PRU00405"/>
    </source>
</evidence>
<evidence type="ECO:0000255" key="9">
    <source>
        <dbReference type="PROSITE-ProRule" id="PRU00408"/>
    </source>
</evidence>
<evidence type="ECO:0000255" key="10">
    <source>
        <dbReference type="PROSITE-ProRule" id="PRU00450"/>
    </source>
</evidence>
<evidence type="ECO:0000255" key="11">
    <source>
        <dbReference type="PROSITE-ProRule" id="PRU00457"/>
    </source>
</evidence>
<evidence type="ECO:0000255" key="12">
    <source>
        <dbReference type="PROSITE-ProRule" id="PRU00506"/>
    </source>
</evidence>
<evidence type="ECO:0000305" key="13"/>
<proteinExistence type="inferred from homology"/>
<sequence length="1506" mass="171974">MAKQGSKEKKGYPELKEVIKATCKIRVGPGKETLTEGNCLWALKTIDFIFEDLKTEPWTITKMYTVWDRLKGLTPEETSKREFASLQATLACIMCSQMGMKPETVQAAKGIISMKEGLQENKEAKGEKVEQLYPNLEKHREVYPIVNLQAGGRSWKAVESVVFQQLQTVAMQHGLVSEDFERQLAYYATTWTSKDILEVLVMMPGNRAQKELIQGKLNEEAERWVRQNPPGPNVLTVDQIMGVGQTNQQASQANMDQARQICLQWVITALRSVRHMSHRPGNPMLVKQKNTESYEDFIARLLEAIDAEPVMDPIKTYLKVTLSYTNASTDCQKQMDRTLGTRVQQATVEEKMQACRDVGSEGFKMQLLAQALRPQGKAGHKGVNQKCYNCGKPGHLARQCRQGIICHHCGKRGHMQKDCRQKKQQGKQQEGATCGAVRAPYVVTEAPPKIEIKVGTRWKKLLVDTGADKTIVTSHDMSGIPKGRIILQGIGGIIEGEKWEQVHLQYKDKMIKGTIVVLATSPVEVLGRDNMRELGIGLIMANLEEKKIPSTRVRLKEGCKGPHIAQWPLTQEKLEGLKEIVDRLEKEGKVGRAPPHWTCNTPIFCIKKKSGKWRMLIDFRELNKQTEDLAEAQLGLPHPGGLQRKKHVTILDIGDAYFTIPLYEPYRQYTCFTMLSPNNLGPCVRYYWKVLPQGWKLSPAVYQFTMQKILRGWIEEHPMIQFGIYMDDIYIGSDLGLEEHRGIVNELASYIAQYGFMLPEDKRQEGYPAKWLGFELHPEKWKFQKHTLPEITEGPITLNKLQKLVGDLVWRQSLIGKSIPNILKLMEGDRALQSERYIESIHVREWEACRQKLKEMEGNYYDEEKDIYGQLDWGNKAIEYIVFQEKGKPLWVNVVHSIKNLSQAQQIIKAAQKLTQEVIIRTGKIPWILLPGREEDWILELQMGNINWMPSFWSCYKGSVRWKKRNVIAEVVPGPTYYTDGGKKNGRGSLGYIASTGEKFRIHEEGTNQQLELRAIEEACKQGPEKMNIVTDSRYAYEFMLRNWDEEVIRNPIQARIMELVHNKEKIGVHWVPGHKGIPQNEEIDRYISEIFLAKEGRGILQKRAEDAGYDLICPQEISIPAGQVKRIAIDLKINLKKDQWAMIGTKSSFANKGVFVQGGIIDSGYQGTIQVVIYNSNNKEVVIPQGRKFAQLILMPLIHEELKPWGETRKTERGEQGFGSTGMYWIENIPLAEEEHNKWHQDAVSLHLEFGIPRTAAEDIVQQCDVCQENKMPSTLRGSNKRGIDHWQVDYTHYEDKIILVWVETNSGLIYAERVKGETGQEFRVQTMKWYAMFAPKSLQSDNGPAFVAESTQLLMKYLGIEHTTGIPWNPQSQALVERTHQTLKNTLEKLIPMFNAFESALAGTLITLNIKRKGGLGTSPMDIFIFNKEQQRIQQQSKSKQEKIRFCYYRTRKRGHPGEWQGPTQVLWGGDGAIVVKDRGTDRYLVIANKDVKFIPPPKEIQKE</sequence>
<accession>P23427</accession>
<protein>
    <recommendedName>
        <fullName>Gag-Pol polyprotein</fullName>
    </recommendedName>
    <component>
        <recommendedName>
            <fullName>Matrix protein p16</fullName>
        </recommendedName>
    </component>
    <component>
        <recommendedName>
            <fullName>Capsid protein p25</fullName>
        </recommendedName>
    </component>
    <component>
        <recommendedName>
            <fullName>Nucleocapsid protein p14</fullName>
        </recommendedName>
    </component>
    <component>
        <recommendedName>
            <fullName>Protease</fullName>
            <ecNumber evidence="7">3.4.23.-</ecNumber>
        </recommendedName>
        <alternativeName>
            <fullName>Retropepsin</fullName>
        </alternativeName>
    </component>
    <component>
        <recommendedName>
            <fullName>Reverse transcriptase/ribonuclease H</fullName>
            <shortName>RT</shortName>
            <ecNumber evidence="8">2.7.7.49</ecNumber>
            <ecNumber evidence="8">2.7.7.7</ecNumber>
            <ecNumber evidence="9">3.1.26.4</ecNumber>
        </recommendedName>
        <alternativeName>
            <fullName>Exoribonuclease H</fullName>
            <ecNumber>3.1.13.2</ecNumber>
        </alternativeName>
    </component>
    <component>
        <recommendedName>
            <fullName>Deoxyuridine 5'-triphosphate nucleotidohydrolase</fullName>
            <shortName>dUTPase</shortName>
            <ecNumber evidence="13">3.6.1.23</ecNumber>
        </recommendedName>
    </component>
    <component>
        <recommendedName>
            <fullName>Integrase</fullName>
            <shortName>IN</shortName>
            <ecNumber evidence="1">2.7.7.-</ecNumber>
            <ecNumber evidence="1">3.1.-.-</ecNumber>
        </recommendedName>
    </component>
</protein>
<keyword id="KW-0064">Aspartyl protease</keyword>
<keyword id="KW-0167">Capsid protein</keyword>
<keyword id="KW-0229">DNA integration</keyword>
<keyword id="KW-0233">DNA recombination</keyword>
<keyword id="KW-0238">DNA-binding</keyword>
<keyword id="KW-0255">Endonuclease</keyword>
<keyword id="KW-0378">Hydrolase</keyword>
<keyword id="KW-0460">Magnesium</keyword>
<keyword id="KW-0479">Metal-binding</keyword>
<keyword id="KW-0511">Multifunctional enzyme</keyword>
<keyword id="KW-0540">Nuclease</keyword>
<keyword id="KW-0546">Nucleotide metabolism</keyword>
<keyword id="KW-0548">Nucleotidyltransferase</keyword>
<keyword id="KW-0645">Protease</keyword>
<keyword id="KW-0677">Repeat</keyword>
<keyword id="KW-0688">Ribosomal frameshifting</keyword>
<keyword id="KW-0695">RNA-directed DNA polymerase</keyword>
<keyword id="KW-0808">Transferase</keyword>
<keyword id="KW-1179">Viral genome integration</keyword>
<keyword id="KW-0946">Virion</keyword>
<keyword id="KW-1160">Virus entry into host cell</keyword>
<keyword id="KW-0862">Zinc</keyword>
<keyword id="KW-0863">Zinc-finger</keyword>
<gene>
    <name type="primary">pol</name>
</gene>
<reference key="1">
    <citation type="journal article" date="1991" name="Virology">
        <title>Isolation of replication-competent molecular clones of visna virus.</title>
        <authorList>
            <person name="Staskus K.A."/>
            <person name="Retzel E.F."/>
            <person name="Lewis E.D."/>
            <person name="Wietgrefe S.W."/>
            <person name="Silsby J.L."/>
            <person name="Cyr S."/>
            <person name="Rank J.M."/>
            <person name="Haase A.T."/>
            <person name="Fast D."/>
            <person name="Geiser P.T."/>
            <person name="Harty J.T."/>
            <person name="Kong S.H."/>
            <person name="Cook R."/>
            <person name="Lahti C.J."/>
            <person name="Neufeld T.P."/>
            <person name="Porter T.E."/>
            <person name="Shoop E."/>
            <person name="Zachow K.R."/>
        </authorList>
    </citation>
    <scope>NUCLEOTIDE SEQUENCE [GENOMIC DNA]</scope>
</reference>
<feature type="chain" id="PRO_0000443365" description="Gag-Pol polyprotein">
    <location>
        <begin position="1"/>
        <end position="1506"/>
    </location>
</feature>
<feature type="chain" id="PRO_0000443366" description="Matrix protein p16">
    <location>
        <begin position="1"/>
        <end position="143"/>
    </location>
</feature>
<feature type="chain" id="PRO_0000443367" description="Capsid protein p25">
    <location>
        <begin position="144"/>
        <end position="363"/>
    </location>
</feature>
<feature type="chain" id="PRO_0000443368" description="Nucleocapsid protein p14">
    <location>
        <begin position="364"/>
        <end position="442"/>
    </location>
</feature>
<feature type="chain" id="PRO_0000038865" description="Protease">
    <location>
        <begin position="443"/>
        <end position="540"/>
    </location>
</feature>
<feature type="chain" id="PRO_0000038866" description="Reverse transcriptase/ribonuclease H">
    <location>
        <begin position="541"/>
        <end position="1091"/>
    </location>
</feature>
<feature type="chain" id="PRO_0000038867" description="Deoxyuridine 5'-triphosphate nucleotidohydrolase">
    <location>
        <begin position="1092"/>
        <end position="1225"/>
    </location>
</feature>
<feature type="chain" id="PRO_0000038868" description="Integrase">
    <location>
        <begin position="1226"/>
        <end position="1506"/>
    </location>
</feature>
<feature type="domain" description="Peptidase A2" evidence="7">
    <location>
        <begin position="459"/>
        <end position="530"/>
    </location>
</feature>
<feature type="domain" description="Reverse transcriptase" evidence="8">
    <location>
        <begin position="587"/>
        <end position="776"/>
    </location>
</feature>
<feature type="domain" description="RNase H type-1" evidence="9">
    <location>
        <begin position="971"/>
        <end position="1093"/>
    </location>
</feature>
<feature type="domain" description="Integrase catalytic" evidence="11">
    <location>
        <begin position="1270"/>
        <end position="1430"/>
    </location>
</feature>
<feature type="zinc finger region" description="CCHC-type 1" evidence="6">
    <location>
        <begin position="385"/>
        <end position="402"/>
    </location>
</feature>
<feature type="zinc finger region" description="CCHC-type 2" evidence="6">
    <location>
        <begin position="404"/>
        <end position="421"/>
    </location>
</feature>
<feature type="zinc finger region" description="Integrase-type" evidence="10">
    <location>
        <begin position="1228"/>
        <end position="1269"/>
    </location>
</feature>
<feature type="DNA-binding region" description="Integrase-type" evidence="12">
    <location>
        <begin position="1447"/>
        <end position="1499"/>
    </location>
</feature>
<feature type="active site" description="Protease; shared with dimeric partner" evidence="7">
    <location>
        <position position="464"/>
    </location>
</feature>
<feature type="binding site" evidence="8">
    <location>
        <position position="652"/>
    </location>
    <ligand>
        <name>Mg(2+)</name>
        <dbReference type="ChEBI" id="CHEBI:18420"/>
        <label>1</label>
        <note>catalytic; for reverse transcriptase activity</note>
    </ligand>
</feature>
<feature type="binding site" evidence="8">
    <location>
        <position position="727"/>
    </location>
    <ligand>
        <name>Mg(2+)</name>
        <dbReference type="ChEBI" id="CHEBI:18420"/>
        <label>1</label>
        <note>catalytic; for reverse transcriptase activity</note>
    </ligand>
</feature>
<feature type="binding site" evidence="8">
    <location>
        <position position="728"/>
    </location>
    <ligand>
        <name>Mg(2+)</name>
        <dbReference type="ChEBI" id="CHEBI:18420"/>
        <label>1</label>
        <note>catalytic; for reverse transcriptase activity</note>
    </ligand>
</feature>
<feature type="binding site" evidence="9">
    <location>
        <position position="980"/>
    </location>
    <ligand>
        <name>Mg(2+)</name>
        <dbReference type="ChEBI" id="CHEBI:18420"/>
        <label>2</label>
        <note>catalytic; for RNase H activity</note>
    </ligand>
</feature>
<feature type="binding site" evidence="9">
    <location>
        <position position="1012"/>
    </location>
    <ligand>
        <name>Mg(2+)</name>
        <dbReference type="ChEBI" id="CHEBI:18420"/>
        <label>2</label>
        <note>catalytic; for RNase H activity</note>
    </ligand>
</feature>
<feature type="binding site" evidence="9">
    <location>
        <position position="1032"/>
    </location>
    <ligand>
        <name>Mg(2+)</name>
        <dbReference type="ChEBI" id="CHEBI:18420"/>
        <label>2</label>
        <note>catalytic; for RNase H activity</note>
    </ligand>
</feature>
<feature type="binding site" evidence="9">
    <location>
        <position position="1085"/>
    </location>
    <ligand>
        <name>Mg(2+)</name>
        <dbReference type="ChEBI" id="CHEBI:18420"/>
        <label>2</label>
        <note>catalytic; for RNase H activity</note>
    </ligand>
</feature>
<feature type="binding site" evidence="10">
    <location>
        <position position="1237"/>
    </location>
    <ligand>
        <name>Zn(2+)</name>
        <dbReference type="ChEBI" id="CHEBI:29105"/>
    </ligand>
</feature>
<feature type="binding site" evidence="10">
    <location>
        <position position="1241"/>
    </location>
    <ligand>
        <name>Zn(2+)</name>
        <dbReference type="ChEBI" id="CHEBI:29105"/>
    </ligand>
</feature>
<feature type="binding site" evidence="10">
    <location>
        <position position="1265"/>
    </location>
    <ligand>
        <name>Zn(2+)</name>
        <dbReference type="ChEBI" id="CHEBI:29105"/>
    </ligand>
</feature>
<feature type="binding site" evidence="10">
    <location>
        <position position="1268"/>
    </location>
    <ligand>
        <name>Zn(2+)</name>
        <dbReference type="ChEBI" id="CHEBI:29105"/>
    </ligand>
</feature>
<feature type="binding site" evidence="11">
    <location>
        <position position="1291"/>
    </location>
    <ligand>
        <name>Mg(2+)</name>
        <dbReference type="ChEBI" id="CHEBI:18420"/>
        <label>3</label>
        <note>catalytic; for integrase activity</note>
    </ligand>
</feature>
<feature type="binding site" evidence="11">
    <location>
        <position position="1343"/>
    </location>
    <ligand>
        <name>Mg(2+)</name>
        <dbReference type="ChEBI" id="CHEBI:18420"/>
        <label>3</label>
        <note>catalytic; for integrase activity</note>
    </ligand>
</feature>
<feature type="binding site" evidence="13">
    <location>
        <position position="1379"/>
    </location>
    <ligand>
        <name>Mg(2+)</name>
        <dbReference type="ChEBI" id="CHEBI:18420"/>
        <label>3</label>
        <note>catalytic; for integrase activity</note>
    </ligand>
</feature>
<feature type="site" description="Cleavage; by viral protease" evidence="4">
    <location>
        <begin position="363"/>
        <end position="364"/>
    </location>
</feature>
<organismHost>
    <name type="scientific">Ovis aries</name>
    <name type="common">Sheep</name>
    <dbReference type="NCBI Taxonomy" id="9940"/>
</organismHost>
<organism>
    <name type="scientific">Maedi visna virus (strain 1514 / clone LV1-1KS2)</name>
    <name type="common">MVV</name>
    <name type="synonym">Visna lentivirus</name>
    <dbReference type="NCBI Taxonomy" id="11744"/>
    <lineage>
        <taxon>Viruses</taxon>
        <taxon>Riboviria</taxon>
        <taxon>Pararnavirae</taxon>
        <taxon>Artverviricota</taxon>
        <taxon>Revtraviricetes</taxon>
        <taxon>Ortervirales</taxon>
        <taxon>Retroviridae</taxon>
        <taxon>Orthoretrovirinae</taxon>
        <taxon>Lentivirus</taxon>
        <taxon>Visna-maedi virus</taxon>
    </lineage>
</organism>